<accession>Q31ZL0</accession>
<name>NUDJ_SHIBS</name>
<evidence type="ECO:0000250" key="1"/>
<evidence type="ECO:0000255" key="2">
    <source>
        <dbReference type="PROSITE-ProRule" id="PRU00794"/>
    </source>
</evidence>
<evidence type="ECO:0000305" key="3"/>
<organism>
    <name type="scientific">Shigella boydii serotype 4 (strain Sb227)</name>
    <dbReference type="NCBI Taxonomy" id="300268"/>
    <lineage>
        <taxon>Bacteria</taxon>
        <taxon>Pseudomonadati</taxon>
        <taxon>Pseudomonadota</taxon>
        <taxon>Gammaproteobacteria</taxon>
        <taxon>Enterobacterales</taxon>
        <taxon>Enterobacteriaceae</taxon>
        <taxon>Shigella</taxon>
    </lineage>
</organism>
<sequence>MFKPHVTVACVVHAEGKFLVVEETINGKALWNQPAGHLEADETLVEAAARELWEETGISAQPQHFIRMHQWIAPDKTPFLRFLFAIELEQICPTQPHDSDIDCCRWVSAEEILKASNLRSPLVAESIRCYQSGQRYPLEMIGDFNWPFTKGVI</sequence>
<keyword id="KW-0378">Hydrolase</keyword>
<keyword id="KW-0460">Magnesium</keyword>
<proteinExistence type="inferred from homology"/>
<gene>
    <name type="primary">nudJ</name>
    <name type="ordered locus">SBO_1905</name>
</gene>
<protein>
    <recommendedName>
        <fullName>Phosphatase NudJ</fullName>
        <ecNumber>3.6.1.-</ecNumber>
    </recommendedName>
</protein>
<dbReference type="EC" id="3.6.1.-"/>
<dbReference type="EMBL" id="CP000036">
    <property type="protein sequence ID" value="ABB66498.1"/>
    <property type="molecule type" value="Genomic_DNA"/>
</dbReference>
<dbReference type="RefSeq" id="WP_000476089.1">
    <property type="nucleotide sequence ID" value="NC_007613.1"/>
</dbReference>
<dbReference type="SMR" id="Q31ZL0"/>
<dbReference type="GeneID" id="93776276"/>
<dbReference type="KEGG" id="sbo:SBO_1905"/>
<dbReference type="HOGENOM" id="CLU_037162_6_1_6"/>
<dbReference type="Proteomes" id="UP000007067">
    <property type="component" value="Chromosome"/>
</dbReference>
<dbReference type="GO" id="GO:0017110">
    <property type="term" value="F:nucleoside diphosphate phosphatase activity"/>
    <property type="evidence" value="ECO:0007669"/>
    <property type="project" value="InterPro"/>
</dbReference>
<dbReference type="GO" id="GO:0017111">
    <property type="term" value="F:ribonucleoside triphosphate phosphatase activity"/>
    <property type="evidence" value="ECO:0007669"/>
    <property type="project" value="InterPro"/>
</dbReference>
<dbReference type="GO" id="GO:0004787">
    <property type="term" value="F:thiamine diphosphate phosphatase activity"/>
    <property type="evidence" value="ECO:0007669"/>
    <property type="project" value="InterPro"/>
</dbReference>
<dbReference type="CDD" id="cd03675">
    <property type="entry name" value="NUDIX_Hydrolase"/>
    <property type="match status" value="1"/>
</dbReference>
<dbReference type="FunFam" id="3.90.79.10:FF:000017">
    <property type="entry name" value="Phosphatase NudJ"/>
    <property type="match status" value="1"/>
</dbReference>
<dbReference type="Gene3D" id="3.90.79.10">
    <property type="entry name" value="Nucleoside Triphosphate Pyrophosphohydrolase"/>
    <property type="match status" value="1"/>
</dbReference>
<dbReference type="InterPro" id="IPR020476">
    <property type="entry name" value="Nudix_hydrolase"/>
</dbReference>
<dbReference type="InterPro" id="IPR015797">
    <property type="entry name" value="NUDIX_hydrolase-like_dom_sf"/>
</dbReference>
<dbReference type="InterPro" id="IPR020084">
    <property type="entry name" value="NUDIX_hydrolase_CS"/>
</dbReference>
<dbReference type="InterPro" id="IPR000086">
    <property type="entry name" value="NUDIX_hydrolase_dom"/>
</dbReference>
<dbReference type="InterPro" id="IPR033713">
    <property type="entry name" value="NudJ"/>
</dbReference>
<dbReference type="PANTHER" id="PTHR43222">
    <property type="entry name" value="NUDIX HYDROLASE 23"/>
    <property type="match status" value="1"/>
</dbReference>
<dbReference type="PANTHER" id="PTHR43222:SF11">
    <property type="entry name" value="PHOSPHATASE NUDJ"/>
    <property type="match status" value="1"/>
</dbReference>
<dbReference type="Pfam" id="PF00293">
    <property type="entry name" value="NUDIX"/>
    <property type="match status" value="1"/>
</dbReference>
<dbReference type="PRINTS" id="PR00502">
    <property type="entry name" value="NUDIXFAMILY"/>
</dbReference>
<dbReference type="SUPFAM" id="SSF55811">
    <property type="entry name" value="Nudix"/>
    <property type="match status" value="1"/>
</dbReference>
<dbReference type="PROSITE" id="PS51462">
    <property type="entry name" value="NUDIX"/>
    <property type="match status" value="1"/>
</dbReference>
<dbReference type="PROSITE" id="PS00893">
    <property type="entry name" value="NUDIX_BOX"/>
    <property type="match status" value="1"/>
</dbReference>
<feature type="chain" id="PRO_0000342645" description="Phosphatase NudJ">
    <location>
        <begin position="1"/>
        <end position="153"/>
    </location>
</feature>
<feature type="domain" description="Nudix hydrolase" evidence="2">
    <location>
        <begin position="3"/>
        <end position="131"/>
    </location>
</feature>
<feature type="short sequence motif" description="Nudix box">
    <location>
        <begin position="36"/>
        <end position="57"/>
    </location>
</feature>
<comment type="cofactor">
    <cofactor evidence="1">
        <name>Mg(2+)</name>
        <dbReference type="ChEBI" id="CHEBI:18420"/>
    </cofactor>
</comment>
<comment type="subunit">
    <text evidence="1">Monomer.</text>
</comment>
<comment type="similarity">
    <text evidence="3">Belongs to the Nudix hydrolase family. NudJ subfamily.</text>
</comment>
<reference key="1">
    <citation type="journal article" date="2005" name="Nucleic Acids Res.">
        <title>Genome dynamics and diversity of Shigella species, the etiologic agents of bacillary dysentery.</title>
        <authorList>
            <person name="Yang F."/>
            <person name="Yang J."/>
            <person name="Zhang X."/>
            <person name="Chen L."/>
            <person name="Jiang Y."/>
            <person name="Yan Y."/>
            <person name="Tang X."/>
            <person name="Wang J."/>
            <person name="Xiong Z."/>
            <person name="Dong J."/>
            <person name="Xue Y."/>
            <person name="Zhu Y."/>
            <person name="Xu X."/>
            <person name="Sun L."/>
            <person name="Chen S."/>
            <person name="Nie H."/>
            <person name="Peng J."/>
            <person name="Xu J."/>
            <person name="Wang Y."/>
            <person name="Yuan Z."/>
            <person name="Wen Y."/>
            <person name="Yao Z."/>
            <person name="Shen Y."/>
            <person name="Qiang B."/>
            <person name="Hou Y."/>
            <person name="Yu J."/>
            <person name="Jin Q."/>
        </authorList>
    </citation>
    <scope>NUCLEOTIDE SEQUENCE [LARGE SCALE GENOMIC DNA]</scope>
    <source>
        <strain>Sb227</strain>
    </source>
</reference>